<accession>A0A2R2Z574</accession>
<dbReference type="EMBL" id="MF135592">
    <property type="protein sequence ID" value="AUD40038.1"/>
    <property type="molecule type" value="mRNA"/>
</dbReference>
<dbReference type="SMR" id="A0A2R2Z574"/>
<dbReference type="VEuPathDB" id="FungiDB:DVH05_019192"/>
<dbReference type="PHI-base" id="PHI:8060"/>
<dbReference type="GO" id="GO:0005576">
    <property type="term" value="C:extracellular region"/>
    <property type="evidence" value="ECO:0007669"/>
    <property type="project" value="UniProtKB-SubCell"/>
</dbReference>
<dbReference type="InterPro" id="IPR008701">
    <property type="entry name" value="NPP1"/>
</dbReference>
<dbReference type="PANTHER" id="PTHR33657">
    <property type="entry name" value="DOMAIN PROTEIN, PUTATIVE (AFU_ORTHOLOGUE AFUA_5G00600)-RELATED"/>
    <property type="match status" value="1"/>
</dbReference>
<dbReference type="PANTHER" id="PTHR33657:SF8">
    <property type="entry name" value="DOMAIN PROTEIN, PUTATIVE (AFU_ORTHOLOGUE AFUA_5G00600)-RELATED"/>
    <property type="match status" value="1"/>
</dbReference>
<dbReference type="Pfam" id="PF05630">
    <property type="entry name" value="NPP1"/>
    <property type="match status" value="1"/>
</dbReference>
<dbReference type="PIRSF" id="PIRSF029958">
    <property type="entry name" value="Necrosis-inducing_protein"/>
    <property type="match status" value="1"/>
</dbReference>
<keyword id="KW-0325">Glycoprotein</keyword>
<keyword id="KW-0964">Secreted</keyword>
<keyword id="KW-0732">Signal</keyword>
<keyword id="KW-0843">Virulence</keyword>
<feature type="signal peptide" evidence="2">
    <location>
        <begin position="1"/>
        <end position="19"/>
    </location>
</feature>
<feature type="chain" id="PRO_5015332834" description="NLP effector protein Pc129485">
    <location>
        <begin position="20"/>
        <end position="251"/>
    </location>
</feature>
<feature type="short sequence motif" description="Hepta-peptide GHRHDWE motif" evidence="1">
    <location>
        <begin position="127"/>
        <end position="133"/>
    </location>
</feature>
<feature type="glycosylation site" description="N-linked (GlcNAc...) asparagine" evidence="3">
    <location>
        <position position="146"/>
    </location>
</feature>
<feature type="glycosylation site" description="N-linked (GlcNAc...) asparagine" evidence="3">
    <location>
        <position position="218"/>
    </location>
</feature>
<comment type="function">
    <text evidence="4">Secreted effector that contributes strongly to virulence during infection by P.capsici.</text>
</comment>
<comment type="subcellular location">
    <subcellularLocation>
        <location evidence="7">Secreted</location>
    </subcellularLocation>
</comment>
<comment type="induction">
    <text evidence="4">Differentially expressed during the developmental and plant infection phases.</text>
</comment>
<comment type="domain">
    <text evidence="7">Key residues/motif important for the effector activities are degenerated in most NLPs, including the nlp24 peptide consisting of the conserved region I (11-aa immunogenic part) and conserved region II (the heptapeptide GHRHDWE motif) that is important for phytotoxic activity.</text>
</comment>
<comment type="similarity">
    <text evidence="6">Belongs to the Necrosis inducing protein (NPP1) family.</text>
</comment>
<gene>
    <name evidence="5" type="ORF">Pc129485</name>
</gene>
<evidence type="ECO:0000250" key="1">
    <source>
        <dbReference type="UniProtKB" id="L7NCS1"/>
    </source>
</evidence>
<evidence type="ECO:0000255" key="2"/>
<evidence type="ECO:0000255" key="3">
    <source>
        <dbReference type="PROSITE-ProRule" id="PRU00498"/>
    </source>
</evidence>
<evidence type="ECO:0000269" key="4">
    <source>
    </source>
</evidence>
<evidence type="ECO:0000303" key="5">
    <source>
    </source>
</evidence>
<evidence type="ECO:0000305" key="6"/>
<evidence type="ECO:0000305" key="7">
    <source>
    </source>
</evidence>
<name>NLP85_PHYCP</name>
<organism>
    <name type="scientific">Phytophthora capsici</name>
    <dbReference type="NCBI Taxonomy" id="4784"/>
    <lineage>
        <taxon>Eukaryota</taxon>
        <taxon>Sar</taxon>
        <taxon>Stramenopiles</taxon>
        <taxon>Oomycota</taxon>
        <taxon>Peronosporales</taxon>
        <taxon>Peronosporaceae</taxon>
        <taxon>Phytophthora</taxon>
    </lineage>
</organism>
<sequence>MNFRIVLLVLVASLAGAQAQVIGHDQVRPFPQPKPVTVSDKAAVKFKPQLKIADGCHPYPAVQKDGSITGGLKWSGPQDGECTGSKLGSQIYARSAWVNDVWAIMYAWYFPKGRGAVPLPLITRLFGHRHNWEYVIVWIDNPKSKNSTILGVSMSAAVGYASQTPPEAMYVDGDSVKLEYYYNHLLGSTSLQLTEDTGEFQDLITWDELSKLARYSLNHTDWDETLFDLAGLKMPLKDGVFQELLDKAWPF</sequence>
<protein>
    <recommendedName>
        <fullName evidence="5">NLP effector protein Pc129485</fullName>
    </recommendedName>
    <alternativeName>
        <fullName evidence="5">Necrosis-inducing Pc129485</fullName>
    </alternativeName>
    <alternativeName>
        <fullName evidence="5">Nep1-like protein Pc129485</fullName>
    </alternativeName>
</protein>
<reference key="1">
    <citation type="submission" date="2017-05" db="EMBL/GenBank/DDBJ databases">
        <authorList>
            <person name="Song R."/>
            <person name="Chenine A.L."/>
            <person name="Ruprecht R.M."/>
        </authorList>
    </citation>
    <scope>NUCLEOTIDE SEQUENCE [MRNA]</scope>
    <source>
        <strain>Pc537</strain>
    </source>
</reference>
<reference key="2">
    <citation type="journal article" date="2018" name="Mol. Genet. Genomics">
        <title>Identification and functional analysis of the NLP-encoding genes from the phytopathogenic oomycete Phytophthora capsici.</title>
        <authorList>
            <person name="Chen X.R."/>
            <person name="Huang S.X."/>
            <person name="Zhang Y."/>
            <person name="Sheng G.L."/>
            <person name="Li Y.P."/>
            <person name="Zhu F."/>
        </authorList>
    </citation>
    <scope>NUCLEOTIDE SEQUENCE [MRNA]</scope>
    <scope>FUNCTION</scope>
    <scope>DOMAIN</scope>
    <scope>INDUCTION</scope>
    <source>
        <strain>Pc537</strain>
    </source>
</reference>
<proteinExistence type="evidence at transcript level"/>